<keyword id="KW-0997">Cell inner membrane</keyword>
<keyword id="KW-1003">Cell membrane</keyword>
<keyword id="KW-0472">Membrane</keyword>
<keyword id="KW-0653">Protein transport</keyword>
<keyword id="KW-1185">Reference proteome</keyword>
<keyword id="KW-0812">Transmembrane</keyword>
<keyword id="KW-1133">Transmembrane helix</keyword>
<keyword id="KW-0813">Transport</keyword>
<dbReference type="EMBL" id="U18997">
    <property type="protein sequence ID" value="AAA58129.1"/>
    <property type="molecule type" value="Genomic_DNA"/>
</dbReference>
<dbReference type="EMBL" id="U00096">
    <property type="protein sequence ID" value="AAC76357.1"/>
    <property type="molecule type" value="Genomic_DNA"/>
</dbReference>
<dbReference type="EMBL" id="AP009048">
    <property type="protein sequence ID" value="BAE77959.1"/>
    <property type="molecule type" value="Genomic_DNA"/>
</dbReference>
<dbReference type="PIR" id="G65126">
    <property type="entry name" value="G65126"/>
</dbReference>
<dbReference type="RefSeq" id="NP_417791.1">
    <property type="nucleotide sequence ID" value="NC_000913.3"/>
</dbReference>
<dbReference type="RefSeq" id="WP_001058522.1">
    <property type="nucleotide sequence ID" value="NZ_STEB01000038.1"/>
</dbReference>
<dbReference type="SMR" id="P45762"/>
<dbReference type="BioGRID" id="4263432">
    <property type="interactions" value="343"/>
</dbReference>
<dbReference type="FunCoup" id="P45762">
    <property type="interactions" value="56"/>
</dbReference>
<dbReference type="STRING" id="511145.b3332"/>
<dbReference type="PaxDb" id="511145-b3332"/>
<dbReference type="EnsemblBacteria" id="AAC76357">
    <property type="protein sequence ID" value="AAC76357"/>
    <property type="gene ID" value="b3332"/>
</dbReference>
<dbReference type="GeneID" id="947831"/>
<dbReference type="KEGG" id="ecj:JW3294"/>
<dbReference type="KEGG" id="eco:b3332"/>
<dbReference type="KEGG" id="ecoc:C3026_18100"/>
<dbReference type="PATRIC" id="fig|1411691.4.peg.3399"/>
<dbReference type="EchoBASE" id="EB2731"/>
<dbReference type="eggNOG" id="COG3156">
    <property type="taxonomic scope" value="Bacteria"/>
</dbReference>
<dbReference type="HOGENOM" id="CLU_057294_0_0_6"/>
<dbReference type="InParanoid" id="P45762"/>
<dbReference type="OMA" id="GWRNLND"/>
<dbReference type="OrthoDB" id="9788973at2"/>
<dbReference type="PhylomeDB" id="P45762"/>
<dbReference type="BioCyc" id="EcoCyc:G7710-MONOMER"/>
<dbReference type="BioCyc" id="MetaCyc:G7710-MONOMER"/>
<dbReference type="PRO" id="PR:P45762"/>
<dbReference type="Proteomes" id="UP000000625">
    <property type="component" value="Chromosome"/>
</dbReference>
<dbReference type="GO" id="GO:0005886">
    <property type="term" value="C:plasma membrane"/>
    <property type="evidence" value="ECO:0007669"/>
    <property type="project" value="UniProtKB-SubCell"/>
</dbReference>
<dbReference type="GO" id="GO:0009306">
    <property type="term" value="P:protein secretion"/>
    <property type="evidence" value="ECO:0007669"/>
    <property type="project" value="InterPro"/>
</dbReference>
<dbReference type="Gene3D" id="1.10.40.60">
    <property type="entry name" value="EpsJ-like"/>
    <property type="match status" value="2"/>
</dbReference>
<dbReference type="Gene3D" id="3.30.1300.30">
    <property type="entry name" value="GSPII I/J protein-like"/>
    <property type="match status" value="1"/>
</dbReference>
<dbReference type="InterPro" id="IPR005628">
    <property type="entry name" value="GspK"/>
</dbReference>
<dbReference type="InterPro" id="IPR038072">
    <property type="entry name" value="GspK_central_sf"/>
</dbReference>
<dbReference type="InterPro" id="IPR045584">
    <property type="entry name" value="Pilin-like"/>
</dbReference>
<dbReference type="InterPro" id="IPR049031">
    <property type="entry name" value="T2SSK_SAM-like_1st"/>
</dbReference>
<dbReference type="InterPro" id="IPR049179">
    <property type="entry name" value="T2SSK_SAM-like_2nd"/>
</dbReference>
<dbReference type="NCBIfam" id="NF037980">
    <property type="entry name" value="T2SS_GspK"/>
    <property type="match status" value="1"/>
</dbReference>
<dbReference type="PANTHER" id="PTHR38831">
    <property type="entry name" value="TYPE II SECRETION SYSTEM PROTEIN K"/>
    <property type="match status" value="1"/>
</dbReference>
<dbReference type="PANTHER" id="PTHR38831:SF1">
    <property type="entry name" value="TYPE II SECRETION SYSTEM PROTEIN K-RELATED"/>
    <property type="match status" value="1"/>
</dbReference>
<dbReference type="Pfam" id="PF03934">
    <property type="entry name" value="T2SSK"/>
    <property type="match status" value="1"/>
</dbReference>
<dbReference type="Pfam" id="PF21687">
    <property type="entry name" value="T2SSK_1st"/>
    <property type="match status" value="1"/>
</dbReference>
<dbReference type="PIRSF" id="PIRSF002786">
    <property type="entry name" value="XcpX"/>
    <property type="match status" value="1"/>
</dbReference>
<dbReference type="SUPFAM" id="SSF158544">
    <property type="entry name" value="GspK insert domain-like"/>
    <property type="match status" value="2"/>
</dbReference>
<dbReference type="SUPFAM" id="SSF54523">
    <property type="entry name" value="Pili subunits"/>
    <property type="match status" value="1"/>
</dbReference>
<proteinExistence type="evidence at transcript level"/>
<organism>
    <name type="scientific">Escherichia coli (strain K12)</name>
    <dbReference type="NCBI Taxonomy" id="83333"/>
    <lineage>
        <taxon>Bacteria</taxon>
        <taxon>Pseudomonadati</taxon>
        <taxon>Pseudomonadota</taxon>
        <taxon>Gammaproteobacteria</taxon>
        <taxon>Enterobacterales</taxon>
        <taxon>Enterobacteriaceae</taxon>
        <taxon>Escherichia</taxon>
    </lineage>
</organism>
<gene>
    <name type="primary">gspK</name>
    <name type="synonym">yheJ</name>
    <name type="ordered locus">b3332</name>
    <name type="ordered locus">JW3294</name>
</gene>
<evidence type="ECO:0000250" key="1">
    <source>
        <dbReference type="UniProtKB" id="Q00518"/>
    </source>
</evidence>
<evidence type="ECO:0000255" key="2"/>
<evidence type="ECO:0000269" key="3">
    <source>
    </source>
</evidence>
<evidence type="ECO:0000305" key="4"/>
<protein>
    <recommendedName>
        <fullName>Putative type II secretion system protein K</fullName>
        <shortName>T2SS protein K</shortName>
    </recommendedName>
    <alternativeName>
        <fullName>Putative general secretion pathway protein K</fullName>
    </alternativeName>
</protein>
<reference key="1">
    <citation type="journal article" date="1997" name="Science">
        <title>The complete genome sequence of Escherichia coli K-12.</title>
        <authorList>
            <person name="Blattner F.R."/>
            <person name="Plunkett G. III"/>
            <person name="Bloch C.A."/>
            <person name="Perna N.T."/>
            <person name="Burland V."/>
            <person name="Riley M."/>
            <person name="Collado-Vides J."/>
            <person name="Glasner J.D."/>
            <person name="Rode C.K."/>
            <person name="Mayhew G.F."/>
            <person name="Gregor J."/>
            <person name="Davis N.W."/>
            <person name="Kirkpatrick H.A."/>
            <person name="Goeden M.A."/>
            <person name="Rose D.J."/>
            <person name="Mau B."/>
            <person name="Shao Y."/>
        </authorList>
    </citation>
    <scope>NUCLEOTIDE SEQUENCE [LARGE SCALE GENOMIC DNA]</scope>
    <source>
        <strain>K12 / MG1655 / ATCC 47076</strain>
    </source>
</reference>
<reference key="2">
    <citation type="journal article" date="2006" name="Mol. Syst. Biol.">
        <title>Highly accurate genome sequences of Escherichia coli K-12 strains MG1655 and W3110.</title>
        <authorList>
            <person name="Hayashi K."/>
            <person name="Morooka N."/>
            <person name="Yamamoto Y."/>
            <person name="Fujita K."/>
            <person name="Isono K."/>
            <person name="Choi S."/>
            <person name="Ohtsubo E."/>
            <person name="Baba T."/>
            <person name="Wanner B.L."/>
            <person name="Mori H."/>
            <person name="Horiuchi T."/>
        </authorList>
    </citation>
    <scope>NUCLEOTIDE SEQUENCE [LARGE SCALE GENOMIC DNA]</scope>
    <source>
        <strain>K12 / W3110 / ATCC 27325 / DSM 5911</strain>
    </source>
</reference>
<reference key="3">
    <citation type="journal article" date="1996" name="J. Bacteriol.">
        <title>The cryptic general secretory pathway (gsp) operon of Escherichia coli K-12 encodes functional proteins.</title>
        <authorList>
            <person name="Francetic O."/>
            <person name="Pugsley A.P."/>
        </authorList>
    </citation>
    <scope>LACK OF EXPRESSION</scope>
    <source>
        <strain>K12 / MC4100 / ATCC 35695 / DSM 6574</strain>
    </source>
</reference>
<reference key="4">
    <citation type="journal article" date="2000" name="EMBO J.">
        <title>Expression of the endogenous type II secretion pathway in Escherichia coli leads to chitinase secretion.</title>
        <authorList>
            <person name="Francetic O."/>
            <person name="Belin D."/>
            <person name="Badaut C."/>
            <person name="Pugsley A.P."/>
        </authorList>
    </citation>
    <scope>LACK OF EXPRESSION</scope>
    <scope>TRANSCRIPTIONAL REGULATION</scope>
    <source>
        <strain>K12 / MC4100 / ATCC 35695 / DSM 6574</strain>
    </source>
</reference>
<accession>P45762</accession>
<accession>Q2M6Z7</accession>
<comment type="function">
    <text evidence="1">Component of the type II secretion system required for the energy-dependent secretion of extracellular factors such as proteases and toxins from the periplasm. Plays a role in pseudopilus assembly and seems to control its length. Interacts with the pseudopilus tip complex that is critical for the recognition and binding of secretion substrates.</text>
</comment>
<comment type="subunit">
    <text evidence="1">Type II secretion is composed of four main components: the outer membrane complex, the inner membrane complex, the cytoplasmic secretion ATPase and the periplasm-spanning pseudopilus. Interacts with core component GspG.</text>
</comment>
<comment type="subcellular location">
    <subcellularLocation>
        <location evidence="1">Cell inner membrane</location>
    </subcellularLocation>
</comment>
<comment type="induction">
    <text evidence="3">Silenced by the DNA-binding protein H-NS under standard growth conditions.</text>
</comment>
<comment type="PTM">
    <text evidence="1">Cleaved by prepilin peptidase.</text>
</comment>
<comment type="miscellaneous">
    <text>Part of a cryptic operon that encodes proteins involved in type II secretion machinery in other organisms, but is not expressed in strain K12.</text>
</comment>
<comment type="similarity">
    <text evidence="4">Belongs to the GSP K family.</text>
</comment>
<feature type="propeptide" id="PRO_0000449555" description="Leader sequence" evidence="1">
    <location>
        <begin position="1"/>
        <end position="7"/>
    </location>
</feature>
<feature type="chain" id="PRO_0000215007" description="Putative type II secretion system protein K">
    <location>
        <begin position="8"/>
        <end position="327"/>
    </location>
</feature>
<feature type="transmembrane region" description="Helical" evidence="2">
    <location>
        <begin position="7"/>
        <end position="27"/>
    </location>
</feature>
<feature type="topological domain" description="Periplasmic" evidence="2">
    <location>
        <begin position="28"/>
        <end position="327"/>
    </location>
</feature>
<name>GSPK_ECOLI</name>
<sequence>MNNEQRGVALLIVLMLLALMAALAADMTLSFHSQLQRTRQVNHHLQRQYDIELAEKLALASLTQDVKDNDRQTTLQQYWAQPQQLQLEDGNTVKWQLRDAQHCFNLNALAKISDDPLASPDFPAQVFSALLINAGIDRGNTDEIVQSIADYIDVDDSPRFHGAEDSFYQSQTPPRHSANQMLFLTGELRQIKGITENIYQRLIPYVCVLPTTELSINLNMLTENDIPLFRALFLNNITDADARVLLQKRPREGWLTTDAFLYWAQQDFSGVKPLVAQVKRHLFPYSRYFTLSTESISDEQSQGWQSHIFFNRKQQSAQIYRRTLQLY</sequence>